<dbReference type="EMBL" id="AF495659">
    <property type="protein sequence ID" value="AAM18518.1"/>
    <property type="molecule type" value="mRNA"/>
</dbReference>
<dbReference type="RefSeq" id="XP_008951549.1">
    <property type="nucleotide sequence ID" value="XM_008953301.4"/>
</dbReference>
<dbReference type="SMR" id="Q7JGX4"/>
<dbReference type="STRING" id="9597.ENSPPAP00000009309"/>
<dbReference type="Ensembl" id="ENSPPAT00000031950.1">
    <property type="protein sequence ID" value="ENSPPAP00000009309.1"/>
    <property type="gene ID" value="ENSPPAG00000027878.1"/>
</dbReference>
<dbReference type="GeneID" id="100983914"/>
<dbReference type="KEGG" id="pps:100983914"/>
<dbReference type="CTD" id="4694"/>
<dbReference type="eggNOG" id="ENOG502S3S5">
    <property type="taxonomic scope" value="Eukaryota"/>
</dbReference>
<dbReference type="GeneTree" id="ENSGT00390000007560"/>
<dbReference type="OMA" id="WALMERD"/>
<dbReference type="Proteomes" id="UP000240080">
    <property type="component" value="Chromosome X"/>
</dbReference>
<dbReference type="Bgee" id="ENSPPAG00000027878">
    <property type="expression patterns" value="Expressed in heart and 6 other cell types or tissues"/>
</dbReference>
<dbReference type="GO" id="GO:0005743">
    <property type="term" value="C:mitochondrial inner membrane"/>
    <property type="evidence" value="ECO:0007669"/>
    <property type="project" value="UniProtKB-SubCell"/>
</dbReference>
<dbReference type="GO" id="GO:0045271">
    <property type="term" value="C:respiratory chain complex I"/>
    <property type="evidence" value="ECO:0000250"/>
    <property type="project" value="UniProtKB"/>
</dbReference>
<dbReference type="InterPro" id="IPR017384">
    <property type="entry name" value="NADH_Ub_cplx-1_asu_su-1"/>
</dbReference>
<dbReference type="PANTHER" id="PTHR17098:SF2">
    <property type="entry name" value="NADH DEHYDROGENASE [UBIQUINONE] 1 ALPHA SUBCOMPLEX SUBUNIT 1"/>
    <property type="match status" value="1"/>
</dbReference>
<dbReference type="PANTHER" id="PTHR17098">
    <property type="entry name" value="NADH-UBIQUINONE OXIDOREDUCTASE MWFE SUBUNIT"/>
    <property type="match status" value="1"/>
</dbReference>
<dbReference type="Pfam" id="PF15879">
    <property type="entry name" value="MWFE"/>
    <property type="match status" value="1"/>
</dbReference>
<dbReference type="PIRSF" id="PIRSF038095">
    <property type="entry name" value="NDUA1"/>
    <property type="match status" value="1"/>
</dbReference>
<proteinExistence type="inferred from homology"/>
<feature type="chain" id="PRO_0000118819" description="NADH dehydrogenase [ubiquinone] 1 alpha subcomplex subunit 1">
    <location>
        <begin position="1"/>
        <end position="70"/>
    </location>
</feature>
<feature type="transmembrane region" description="Helical" evidence="2">
    <location>
        <begin position="1"/>
        <end position="21"/>
    </location>
</feature>
<gene>
    <name type="primary">NDUFA1</name>
</gene>
<keyword id="KW-0249">Electron transport</keyword>
<keyword id="KW-0472">Membrane</keyword>
<keyword id="KW-0496">Mitochondrion</keyword>
<keyword id="KW-0999">Mitochondrion inner membrane</keyword>
<keyword id="KW-1185">Reference proteome</keyword>
<keyword id="KW-0679">Respiratory chain</keyword>
<keyword id="KW-0812">Transmembrane</keyword>
<keyword id="KW-1133">Transmembrane helix</keyword>
<keyword id="KW-0813">Transport</keyword>
<sequence length="70" mass="8099">MWFEILPGLSVMGVCLLIPGLATAYIHRFTNGGKEKRVAHFGYHWNLMERDRRISGVDRYYVSKGLENID</sequence>
<reference key="1">
    <citation type="journal article" date="2002" name="J. Biol. Chem.">
        <title>Species-specific and mutant MWFE proteins. Their effect on the assembly of a functional mammalian mitochondrial complex I.</title>
        <authorList>
            <person name="Yadava N."/>
            <person name="Potluri P."/>
            <person name="Smith E.N."/>
            <person name="Bisevac A."/>
            <person name="Scheffler I.E."/>
        </authorList>
    </citation>
    <scope>NUCLEOTIDE SEQUENCE [MRNA]</scope>
</reference>
<name>NDUA1_PANPA</name>
<evidence type="ECO:0000250" key="1">
    <source>
        <dbReference type="UniProtKB" id="O15239"/>
    </source>
</evidence>
<evidence type="ECO:0000255" key="2"/>
<evidence type="ECO:0000305" key="3"/>
<organism>
    <name type="scientific">Pan paniscus</name>
    <name type="common">Pygmy chimpanzee</name>
    <name type="synonym">Bonobo</name>
    <dbReference type="NCBI Taxonomy" id="9597"/>
    <lineage>
        <taxon>Eukaryota</taxon>
        <taxon>Metazoa</taxon>
        <taxon>Chordata</taxon>
        <taxon>Craniata</taxon>
        <taxon>Vertebrata</taxon>
        <taxon>Euteleostomi</taxon>
        <taxon>Mammalia</taxon>
        <taxon>Eutheria</taxon>
        <taxon>Euarchontoglires</taxon>
        <taxon>Primates</taxon>
        <taxon>Haplorrhini</taxon>
        <taxon>Catarrhini</taxon>
        <taxon>Hominidae</taxon>
        <taxon>Pan</taxon>
    </lineage>
</organism>
<protein>
    <recommendedName>
        <fullName>NADH dehydrogenase [ubiquinone] 1 alpha subcomplex subunit 1</fullName>
    </recommendedName>
    <alternativeName>
        <fullName>Complex I-MWFE</fullName>
        <shortName>CI-MWFE</shortName>
    </alternativeName>
    <alternativeName>
        <fullName>NADH-ubiquinone oxidoreductase MWFE subunit</fullName>
    </alternativeName>
</protein>
<accession>Q7JGX4</accession>
<comment type="function">
    <text evidence="1">Accessory subunit of the mitochondrial membrane respiratory chain NADH dehydrogenase (Complex I), that is believed not to be involved in catalysis. Complex I functions in the transfer of electrons from NADH to the respiratory chain. The immediate electron acceptor for the enzyme is believed to be ubiquinone.</text>
</comment>
<comment type="subunit">
    <text evidence="1">Complex I is composed of 45 different subunits.</text>
</comment>
<comment type="subcellular location">
    <subcellularLocation>
        <location evidence="1">Mitochondrion inner membrane</location>
        <topology evidence="2">Single-pass membrane protein</topology>
        <orientation evidence="1">Matrix side</orientation>
    </subcellularLocation>
</comment>
<comment type="similarity">
    <text evidence="3">Belongs to the complex I NDUFA1 subunit family.</text>
</comment>